<name>RS4_AZOC5</name>
<comment type="function">
    <text evidence="1">One of the primary rRNA binding proteins, it binds directly to 16S rRNA where it nucleates assembly of the body of the 30S subunit.</text>
</comment>
<comment type="function">
    <text evidence="1">With S5 and S12 plays an important role in translational accuracy.</text>
</comment>
<comment type="subunit">
    <text evidence="1">Part of the 30S ribosomal subunit. Contacts protein S5. The interaction surface between S4 and S5 is involved in control of translational fidelity.</text>
</comment>
<comment type="similarity">
    <text evidence="1">Belongs to the universal ribosomal protein uS4 family.</text>
</comment>
<gene>
    <name evidence="1" type="primary">rpsD</name>
    <name type="ordered locus">AZC_2224</name>
</gene>
<protein>
    <recommendedName>
        <fullName evidence="1">Small ribosomal subunit protein uS4</fullName>
    </recommendedName>
    <alternativeName>
        <fullName evidence="3">30S ribosomal protein S4</fullName>
    </alternativeName>
</protein>
<sequence length="205" mass="23484">MSKRISAKHKIDRRMGENIWGRSKSPVNRREYGPGQHGQRRKGKLSDFGVQLRAKQKLKGYYGSIGEKQFHAVYVEASRLKGDTGANLIGLLERRLDAVVYRAKFVPTIFAARQFVNHGHVKVNGRRVNIPSYQVKVGDVIEVREASKQMALVLEAVQLAERDVPDYLEVDHNRLTAKFNRIPELNEVPYPVQMEPNLVVEFYSR</sequence>
<keyword id="KW-1185">Reference proteome</keyword>
<keyword id="KW-0687">Ribonucleoprotein</keyword>
<keyword id="KW-0689">Ribosomal protein</keyword>
<keyword id="KW-0694">RNA-binding</keyword>
<keyword id="KW-0699">rRNA-binding</keyword>
<evidence type="ECO:0000255" key="1">
    <source>
        <dbReference type="HAMAP-Rule" id="MF_01306"/>
    </source>
</evidence>
<evidence type="ECO:0000256" key="2">
    <source>
        <dbReference type="SAM" id="MobiDB-lite"/>
    </source>
</evidence>
<evidence type="ECO:0000305" key="3"/>
<dbReference type="EMBL" id="AP009384">
    <property type="protein sequence ID" value="BAF88222.1"/>
    <property type="molecule type" value="Genomic_DNA"/>
</dbReference>
<dbReference type="RefSeq" id="WP_012170751.1">
    <property type="nucleotide sequence ID" value="NC_009937.1"/>
</dbReference>
<dbReference type="SMR" id="A8I889"/>
<dbReference type="STRING" id="438753.AZC_2224"/>
<dbReference type="KEGG" id="azc:AZC_2224"/>
<dbReference type="eggNOG" id="COG0522">
    <property type="taxonomic scope" value="Bacteria"/>
</dbReference>
<dbReference type="HOGENOM" id="CLU_092403_0_0_5"/>
<dbReference type="Proteomes" id="UP000000270">
    <property type="component" value="Chromosome"/>
</dbReference>
<dbReference type="GO" id="GO:0015935">
    <property type="term" value="C:small ribosomal subunit"/>
    <property type="evidence" value="ECO:0007669"/>
    <property type="project" value="InterPro"/>
</dbReference>
<dbReference type="GO" id="GO:0019843">
    <property type="term" value="F:rRNA binding"/>
    <property type="evidence" value="ECO:0007669"/>
    <property type="project" value="UniProtKB-UniRule"/>
</dbReference>
<dbReference type="GO" id="GO:0003735">
    <property type="term" value="F:structural constituent of ribosome"/>
    <property type="evidence" value="ECO:0007669"/>
    <property type="project" value="InterPro"/>
</dbReference>
<dbReference type="GO" id="GO:0042274">
    <property type="term" value="P:ribosomal small subunit biogenesis"/>
    <property type="evidence" value="ECO:0007669"/>
    <property type="project" value="TreeGrafter"/>
</dbReference>
<dbReference type="GO" id="GO:0006412">
    <property type="term" value="P:translation"/>
    <property type="evidence" value="ECO:0007669"/>
    <property type="project" value="UniProtKB-UniRule"/>
</dbReference>
<dbReference type="CDD" id="cd00165">
    <property type="entry name" value="S4"/>
    <property type="match status" value="1"/>
</dbReference>
<dbReference type="FunFam" id="3.10.290.10:FF:000001">
    <property type="entry name" value="30S ribosomal protein S4"/>
    <property type="match status" value="1"/>
</dbReference>
<dbReference type="Gene3D" id="1.10.1050.10">
    <property type="entry name" value="Ribosomal Protein S4 Delta 41, Chain A, domain 1"/>
    <property type="match status" value="1"/>
</dbReference>
<dbReference type="Gene3D" id="3.10.290.10">
    <property type="entry name" value="RNA-binding S4 domain"/>
    <property type="match status" value="1"/>
</dbReference>
<dbReference type="HAMAP" id="MF_01306_B">
    <property type="entry name" value="Ribosomal_uS4_B"/>
    <property type="match status" value="1"/>
</dbReference>
<dbReference type="InterPro" id="IPR022801">
    <property type="entry name" value="Ribosomal_uS4"/>
</dbReference>
<dbReference type="InterPro" id="IPR005709">
    <property type="entry name" value="Ribosomal_uS4_bac-type"/>
</dbReference>
<dbReference type="InterPro" id="IPR018079">
    <property type="entry name" value="Ribosomal_uS4_CS"/>
</dbReference>
<dbReference type="InterPro" id="IPR001912">
    <property type="entry name" value="Ribosomal_uS4_N"/>
</dbReference>
<dbReference type="InterPro" id="IPR002942">
    <property type="entry name" value="S4_RNA-bd"/>
</dbReference>
<dbReference type="InterPro" id="IPR036986">
    <property type="entry name" value="S4_RNA-bd_sf"/>
</dbReference>
<dbReference type="NCBIfam" id="NF003717">
    <property type="entry name" value="PRK05327.1"/>
    <property type="match status" value="1"/>
</dbReference>
<dbReference type="NCBIfam" id="TIGR01017">
    <property type="entry name" value="rpsD_bact"/>
    <property type="match status" value="1"/>
</dbReference>
<dbReference type="PANTHER" id="PTHR11831">
    <property type="entry name" value="30S 40S RIBOSOMAL PROTEIN"/>
    <property type="match status" value="1"/>
</dbReference>
<dbReference type="PANTHER" id="PTHR11831:SF4">
    <property type="entry name" value="SMALL RIBOSOMAL SUBUNIT PROTEIN US4M"/>
    <property type="match status" value="1"/>
</dbReference>
<dbReference type="Pfam" id="PF00163">
    <property type="entry name" value="Ribosomal_S4"/>
    <property type="match status" value="1"/>
</dbReference>
<dbReference type="Pfam" id="PF01479">
    <property type="entry name" value="S4"/>
    <property type="match status" value="1"/>
</dbReference>
<dbReference type="SMART" id="SM01390">
    <property type="entry name" value="Ribosomal_S4"/>
    <property type="match status" value="1"/>
</dbReference>
<dbReference type="SMART" id="SM00363">
    <property type="entry name" value="S4"/>
    <property type="match status" value="1"/>
</dbReference>
<dbReference type="SUPFAM" id="SSF55174">
    <property type="entry name" value="Alpha-L RNA-binding motif"/>
    <property type="match status" value="1"/>
</dbReference>
<dbReference type="PROSITE" id="PS00632">
    <property type="entry name" value="RIBOSOMAL_S4"/>
    <property type="match status" value="1"/>
</dbReference>
<dbReference type="PROSITE" id="PS50889">
    <property type="entry name" value="S4"/>
    <property type="match status" value="1"/>
</dbReference>
<reference key="1">
    <citation type="submission" date="2007-04" db="EMBL/GenBank/DDBJ databases">
        <title>Complete genome sequence of the nitrogen-fixing bacterium Azorhizobium caulinodans ORS571.</title>
        <authorList>
            <person name="Lee K.B."/>
            <person name="Backer P.D."/>
            <person name="Aono T."/>
            <person name="Liu C.T."/>
            <person name="Suzuki S."/>
            <person name="Suzuki T."/>
            <person name="Kaneko T."/>
            <person name="Yamada M."/>
            <person name="Tabata S."/>
            <person name="Kupfer D.M."/>
            <person name="Najar F.Z."/>
            <person name="Wiley G.B."/>
            <person name="Roe B."/>
            <person name="Binnewies T."/>
            <person name="Ussery D."/>
            <person name="Vereecke D."/>
            <person name="Gevers D."/>
            <person name="Holsters M."/>
            <person name="Oyaizu H."/>
        </authorList>
    </citation>
    <scope>NUCLEOTIDE SEQUENCE [LARGE SCALE GENOMIC DNA]</scope>
    <source>
        <strain>ATCC 43989 / DSM 5975 / JCM 20966 / LMG 6465 / NBRC 14845 / NCIMB 13405 / ORS 571</strain>
    </source>
</reference>
<feature type="chain" id="PRO_1000085959" description="Small ribosomal subunit protein uS4">
    <location>
        <begin position="1"/>
        <end position="205"/>
    </location>
</feature>
<feature type="domain" description="S4 RNA-binding" evidence="1">
    <location>
        <begin position="94"/>
        <end position="157"/>
    </location>
</feature>
<feature type="region of interest" description="Disordered" evidence="2">
    <location>
        <begin position="19"/>
        <end position="45"/>
    </location>
</feature>
<organism>
    <name type="scientific">Azorhizobium caulinodans (strain ATCC 43989 / DSM 5975 / JCM 20966 / LMG 6465 / NBRC 14845 / NCIMB 13405 / ORS 571)</name>
    <dbReference type="NCBI Taxonomy" id="438753"/>
    <lineage>
        <taxon>Bacteria</taxon>
        <taxon>Pseudomonadati</taxon>
        <taxon>Pseudomonadota</taxon>
        <taxon>Alphaproteobacteria</taxon>
        <taxon>Hyphomicrobiales</taxon>
        <taxon>Xanthobacteraceae</taxon>
        <taxon>Azorhizobium</taxon>
    </lineage>
</organism>
<accession>A8I889</accession>
<proteinExistence type="inferred from homology"/>